<sequence length="92" mass="10490">MKFEAVLRTDLGKGASRRLRNTGYFPAIVYGGEAAPVSISLNHDDVMNQMDKPEFYEAIVLVIDGQEVKVKPQDVQRHAYKPKVEHMDFIRI</sequence>
<reference key="1">
    <citation type="journal article" date="2000" name="Nature">
        <title>DNA sequence of both chromosomes of the cholera pathogen Vibrio cholerae.</title>
        <authorList>
            <person name="Heidelberg J.F."/>
            <person name="Eisen J.A."/>
            <person name="Nelson W.C."/>
            <person name="Clayton R.A."/>
            <person name="Gwinn M.L."/>
            <person name="Dodson R.J."/>
            <person name="Haft D.H."/>
            <person name="Hickey E.K."/>
            <person name="Peterson J.D."/>
            <person name="Umayam L.A."/>
            <person name="Gill S.R."/>
            <person name="Nelson K.E."/>
            <person name="Read T.D."/>
            <person name="Tettelin H."/>
            <person name="Richardson D.L."/>
            <person name="Ermolaeva M.D."/>
            <person name="Vamathevan J.J."/>
            <person name="Bass S."/>
            <person name="Qin H."/>
            <person name="Dragoi I."/>
            <person name="Sellers P."/>
            <person name="McDonald L.A."/>
            <person name="Utterback T.R."/>
            <person name="Fleischmann R.D."/>
            <person name="Nierman W.C."/>
            <person name="White O."/>
            <person name="Salzberg S.L."/>
            <person name="Smith H.O."/>
            <person name="Colwell R.R."/>
            <person name="Mekalanos J.J."/>
            <person name="Venter J.C."/>
            <person name="Fraser C.M."/>
        </authorList>
    </citation>
    <scope>NUCLEOTIDE SEQUENCE [LARGE SCALE GENOMIC DNA]</scope>
    <source>
        <strain>ATCC 39315 / El Tor Inaba N16961</strain>
    </source>
</reference>
<accession>Q9KRK0</accession>
<comment type="function">
    <text evidence="1">This is one of the proteins that binds to the 5S RNA in the ribosome where it forms part of the central protuberance.</text>
</comment>
<comment type="subunit">
    <text evidence="1">Part of the 50S ribosomal subunit; part of the 5S rRNA/L5/L18/L25 subcomplex. Contacts the 5S rRNA. Binds to the 5S rRNA independently of L5 and L18.</text>
</comment>
<comment type="similarity">
    <text evidence="1">Belongs to the bacterial ribosomal protein bL25 family.</text>
</comment>
<keyword id="KW-1185">Reference proteome</keyword>
<keyword id="KW-0687">Ribonucleoprotein</keyword>
<keyword id="KW-0689">Ribosomal protein</keyword>
<keyword id="KW-0694">RNA-binding</keyword>
<keyword id="KW-0699">rRNA-binding</keyword>
<gene>
    <name evidence="1" type="primary">rplY</name>
    <name type="ordered locus">VC_1640</name>
</gene>
<protein>
    <recommendedName>
        <fullName evidence="1">Large ribosomal subunit protein bL25</fullName>
    </recommendedName>
    <alternativeName>
        <fullName evidence="2">50S ribosomal protein L25</fullName>
    </alternativeName>
</protein>
<name>RL25_VIBCH</name>
<feature type="chain" id="PRO_0000181498" description="Large ribosomal subunit protein bL25">
    <location>
        <begin position="1"/>
        <end position="92"/>
    </location>
</feature>
<evidence type="ECO:0000255" key="1">
    <source>
        <dbReference type="HAMAP-Rule" id="MF_01336"/>
    </source>
</evidence>
<evidence type="ECO:0000305" key="2"/>
<proteinExistence type="inferred from homology"/>
<dbReference type="EMBL" id="AE003852">
    <property type="protein sequence ID" value="AAF94791.1"/>
    <property type="molecule type" value="Genomic_DNA"/>
</dbReference>
<dbReference type="PIR" id="C82174">
    <property type="entry name" value="C82174"/>
</dbReference>
<dbReference type="RefSeq" id="NP_231277.1">
    <property type="nucleotide sequence ID" value="NC_002505.1"/>
</dbReference>
<dbReference type="RefSeq" id="WP_000667185.1">
    <property type="nucleotide sequence ID" value="NZ_LT906614.1"/>
</dbReference>
<dbReference type="SMR" id="Q9KRK0"/>
<dbReference type="STRING" id="243277.VC_1640"/>
<dbReference type="DNASU" id="2613771"/>
<dbReference type="EnsemblBacteria" id="AAF94791">
    <property type="protein sequence ID" value="AAF94791"/>
    <property type="gene ID" value="VC_1640"/>
</dbReference>
<dbReference type="GeneID" id="94013653"/>
<dbReference type="KEGG" id="vch:VC_1640"/>
<dbReference type="PATRIC" id="fig|243277.26.peg.1568"/>
<dbReference type="eggNOG" id="COG1825">
    <property type="taxonomic scope" value="Bacteria"/>
</dbReference>
<dbReference type="HOGENOM" id="CLU_137946_0_0_6"/>
<dbReference type="Proteomes" id="UP000000584">
    <property type="component" value="Chromosome 1"/>
</dbReference>
<dbReference type="GO" id="GO:0022625">
    <property type="term" value="C:cytosolic large ribosomal subunit"/>
    <property type="evidence" value="ECO:0000318"/>
    <property type="project" value="GO_Central"/>
</dbReference>
<dbReference type="GO" id="GO:0008097">
    <property type="term" value="F:5S rRNA binding"/>
    <property type="evidence" value="ECO:0000318"/>
    <property type="project" value="GO_Central"/>
</dbReference>
<dbReference type="GO" id="GO:0003735">
    <property type="term" value="F:structural constituent of ribosome"/>
    <property type="evidence" value="ECO:0007669"/>
    <property type="project" value="InterPro"/>
</dbReference>
<dbReference type="GO" id="GO:0006412">
    <property type="term" value="P:translation"/>
    <property type="evidence" value="ECO:0000318"/>
    <property type="project" value="GO_Central"/>
</dbReference>
<dbReference type="CDD" id="cd00495">
    <property type="entry name" value="Ribosomal_L25_TL5_CTC"/>
    <property type="match status" value="1"/>
</dbReference>
<dbReference type="FunFam" id="2.40.240.10:FF:000002">
    <property type="entry name" value="50S ribosomal protein L25"/>
    <property type="match status" value="1"/>
</dbReference>
<dbReference type="Gene3D" id="2.40.240.10">
    <property type="entry name" value="Ribosomal Protein L25, Chain P"/>
    <property type="match status" value="1"/>
</dbReference>
<dbReference type="HAMAP" id="MF_01336">
    <property type="entry name" value="Ribosomal_bL25"/>
    <property type="match status" value="1"/>
</dbReference>
<dbReference type="InterPro" id="IPR020056">
    <property type="entry name" value="Rbsml_bL25/Gln-tRNA_synth_N"/>
</dbReference>
<dbReference type="InterPro" id="IPR011035">
    <property type="entry name" value="Ribosomal_bL25/Gln-tRNA_synth"/>
</dbReference>
<dbReference type="InterPro" id="IPR020055">
    <property type="entry name" value="Ribosomal_bL25_short"/>
</dbReference>
<dbReference type="InterPro" id="IPR029751">
    <property type="entry name" value="Ribosomal_L25_dom"/>
</dbReference>
<dbReference type="InterPro" id="IPR020930">
    <property type="entry name" value="Ribosomal_uL5_bac-type"/>
</dbReference>
<dbReference type="NCBIfam" id="NF004612">
    <property type="entry name" value="PRK05943.1"/>
    <property type="match status" value="1"/>
</dbReference>
<dbReference type="PANTHER" id="PTHR33284">
    <property type="entry name" value="RIBOSOMAL PROTEIN L25/GLN-TRNA SYNTHETASE, ANTI-CODON-BINDING DOMAIN-CONTAINING PROTEIN"/>
    <property type="match status" value="1"/>
</dbReference>
<dbReference type="PANTHER" id="PTHR33284:SF1">
    <property type="entry name" value="RIBOSOMAL PROTEIN L25_GLN-TRNA SYNTHETASE, ANTI-CODON-BINDING DOMAIN-CONTAINING PROTEIN"/>
    <property type="match status" value="1"/>
</dbReference>
<dbReference type="Pfam" id="PF01386">
    <property type="entry name" value="Ribosomal_L25p"/>
    <property type="match status" value="1"/>
</dbReference>
<dbReference type="SUPFAM" id="SSF50715">
    <property type="entry name" value="Ribosomal protein L25-like"/>
    <property type="match status" value="1"/>
</dbReference>
<organism>
    <name type="scientific">Vibrio cholerae serotype O1 (strain ATCC 39315 / El Tor Inaba N16961)</name>
    <dbReference type="NCBI Taxonomy" id="243277"/>
    <lineage>
        <taxon>Bacteria</taxon>
        <taxon>Pseudomonadati</taxon>
        <taxon>Pseudomonadota</taxon>
        <taxon>Gammaproteobacteria</taxon>
        <taxon>Vibrionales</taxon>
        <taxon>Vibrionaceae</taxon>
        <taxon>Vibrio</taxon>
    </lineage>
</organism>